<name>NRDI_SHIBS</name>
<protein>
    <recommendedName>
        <fullName evidence="1">Protein NrdI</fullName>
    </recommendedName>
</protein>
<sequence length="136" mass="15358">MSQLVYFSSSSENTQRFIERLGMPAVRIPLNERERIQVDEPYILIVPSYGGGGTAGAVPRQVIRFLNDEHNRALLRGVIASGNRNFGEAYGRAGDVIARKCGVPWLYRFELMGTQSDIENVRKGVTEFWQRQPQNA</sequence>
<dbReference type="EMBL" id="CP000036">
    <property type="protein sequence ID" value="ABB67364.1"/>
    <property type="molecule type" value="Genomic_DNA"/>
</dbReference>
<dbReference type="RefSeq" id="WP_000080964.1">
    <property type="nucleotide sequence ID" value="NC_007613.1"/>
</dbReference>
<dbReference type="SMR" id="Q31X44"/>
<dbReference type="KEGG" id="sbo:SBO_2843"/>
<dbReference type="HOGENOM" id="CLU_114845_0_0_6"/>
<dbReference type="Proteomes" id="UP000007067">
    <property type="component" value="Chromosome"/>
</dbReference>
<dbReference type="GO" id="GO:0010181">
    <property type="term" value="F:FMN binding"/>
    <property type="evidence" value="ECO:0007669"/>
    <property type="project" value="InterPro"/>
</dbReference>
<dbReference type="GO" id="GO:0036211">
    <property type="term" value="P:protein modification process"/>
    <property type="evidence" value="ECO:0007669"/>
    <property type="project" value="InterPro"/>
</dbReference>
<dbReference type="FunFam" id="3.40.50.360:FF:000005">
    <property type="entry name" value="Protein NrdI"/>
    <property type="match status" value="1"/>
</dbReference>
<dbReference type="Gene3D" id="3.40.50.360">
    <property type="match status" value="1"/>
</dbReference>
<dbReference type="HAMAP" id="MF_00128">
    <property type="entry name" value="NrdI"/>
    <property type="match status" value="1"/>
</dbReference>
<dbReference type="InterPro" id="IPR029039">
    <property type="entry name" value="Flavoprotein-like_sf"/>
</dbReference>
<dbReference type="InterPro" id="IPR020852">
    <property type="entry name" value="RNR_Ib_NrdI_bac"/>
</dbReference>
<dbReference type="InterPro" id="IPR004465">
    <property type="entry name" value="RNR_NrdI"/>
</dbReference>
<dbReference type="NCBIfam" id="TIGR00333">
    <property type="entry name" value="nrdI"/>
    <property type="match status" value="1"/>
</dbReference>
<dbReference type="PANTHER" id="PTHR37297">
    <property type="entry name" value="PROTEIN NRDI"/>
    <property type="match status" value="1"/>
</dbReference>
<dbReference type="PANTHER" id="PTHR37297:SF1">
    <property type="entry name" value="PROTEIN NRDI"/>
    <property type="match status" value="1"/>
</dbReference>
<dbReference type="Pfam" id="PF07972">
    <property type="entry name" value="Flavodoxin_NdrI"/>
    <property type="match status" value="1"/>
</dbReference>
<dbReference type="PIRSF" id="PIRSF005087">
    <property type="entry name" value="NrdI"/>
    <property type="match status" value="1"/>
</dbReference>
<dbReference type="SUPFAM" id="SSF52218">
    <property type="entry name" value="Flavoproteins"/>
    <property type="match status" value="1"/>
</dbReference>
<reference key="1">
    <citation type="journal article" date="2005" name="Nucleic Acids Res.">
        <title>Genome dynamics and diversity of Shigella species, the etiologic agents of bacillary dysentery.</title>
        <authorList>
            <person name="Yang F."/>
            <person name="Yang J."/>
            <person name="Zhang X."/>
            <person name="Chen L."/>
            <person name="Jiang Y."/>
            <person name="Yan Y."/>
            <person name="Tang X."/>
            <person name="Wang J."/>
            <person name="Xiong Z."/>
            <person name="Dong J."/>
            <person name="Xue Y."/>
            <person name="Zhu Y."/>
            <person name="Xu X."/>
            <person name="Sun L."/>
            <person name="Chen S."/>
            <person name="Nie H."/>
            <person name="Peng J."/>
            <person name="Xu J."/>
            <person name="Wang Y."/>
            <person name="Yuan Z."/>
            <person name="Wen Y."/>
            <person name="Yao Z."/>
            <person name="Shen Y."/>
            <person name="Qiang B."/>
            <person name="Hou Y."/>
            <person name="Yu J."/>
            <person name="Jin Q."/>
        </authorList>
    </citation>
    <scope>NUCLEOTIDE SEQUENCE [LARGE SCALE GENOMIC DNA]</scope>
    <source>
        <strain>Sb227</strain>
    </source>
</reference>
<accession>Q31X44</accession>
<comment type="function">
    <text evidence="1">Probably involved in ribonucleotide reductase function.</text>
</comment>
<comment type="similarity">
    <text evidence="1">Belongs to the NrdI family.</text>
</comment>
<organism>
    <name type="scientific">Shigella boydii serotype 4 (strain Sb227)</name>
    <dbReference type="NCBI Taxonomy" id="300268"/>
    <lineage>
        <taxon>Bacteria</taxon>
        <taxon>Pseudomonadati</taxon>
        <taxon>Pseudomonadota</taxon>
        <taxon>Gammaproteobacteria</taxon>
        <taxon>Enterobacterales</taxon>
        <taxon>Enterobacteriaceae</taxon>
        <taxon>Shigella</taxon>
    </lineage>
</organism>
<proteinExistence type="inferred from homology"/>
<gene>
    <name evidence="1" type="primary">nrdI</name>
    <name type="ordered locus">SBO_2843</name>
</gene>
<feature type="chain" id="PRO_1000016521" description="Protein NrdI">
    <location>
        <begin position="1"/>
        <end position="136"/>
    </location>
</feature>
<evidence type="ECO:0000255" key="1">
    <source>
        <dbReference type="HAMAP-Rule" id="MF_00128"/>
    </source>
</evidence>